<dbReference type="iPTMnet" id="P0C8P6"/>
<dbReference type="GO" id="GO:0005576">
    <property type="term" value="C:extracellular region"/>
    <property type="evidence" value="ECO:0007669"/>
    <property type="project" value="UniProtKB-SubCell"/>
</dbReference>
<dbReference type="GO" id="GO:0042742">
    <property type="term" value="P:defense response to bacterium"/>
    <property type="evidence" value="ECO:0007669"/>
    <property type="project" value="UniProtKB-KW"/>
</dbReference>
<dbReference type="GO" id="GO:0031640">
    <property type="term" value="P:killing of cells of another organism"/>
    <property type="evidence" value="ECO:0007669"/>
    <property type="project" value="UniProtKB-KW"/>
</dbReference>
<organism>
    <name type="scientific">Bacillus cereus</name>
    <dbReference type="NCBI Taxonomy" id="1396"/>
    <lineage>
        <taxon>Bacteria</taxon>
        <taxon>Bacillati</taxon>
        <taxon>Bacillota</taxon>
        <taxon>Bacilli</taxon>
        <taxon>Bacillales</taxon>
        <taxon>Bacillaceae</taxon>
        <taxon>Bacillus</taxon>
        <taxon>Bacillus cereus group</taxon>
    </lineage>
</organism>
<evidence type="ECO:0000250" key="1"/>
<evidence type="ECO:0000269" key="2">
    <source>
    </source>
</evidence>
<evidence type="ECO:0000269" key="3">
    <source>
    </source>
</evidence>
<evidence type="ECO:0000305" key="4"/>
<name>THCL_BACCE</name>
<accession>P0C8P6</accession>
<reference key="1">
    <citation type="journal article" date="1976" name="J. Antibiot.">
        <title>Isolation of three new antibiotics, thiocillins I, II and III, related to micrococcin P. Studies on antibiotics from the genus Bacillus. VIII.</title>
        <authorList>
            <person name="Shoji J."/>
            <person name="Hinoo H."/>
            <person name="Wakisaka Y."/>
            <person name="Koizumi K."/>
            <person name="Mayama M."/>
        </authorList>
    </citation>
    <scope>CHARACTERIZATION</scope>
    <scope>SUBCELLULAR LOCATION</scope>
    <source>
        <strain>G-15</strain>
    </source>
</reference>
<reference key="2">
    <citation type="journal article" date="1981" name="J. Antibiot.">
        <title>Structural studies on thiocillins I, II and III (studies on antibiotics from the genus Bacillus XXIX).</title>
        <authorList>
            <person name="Shoji J."/>
            <person name="Kato T."/>
            <person name="Yoshimura Y."/>
            <person name="Tori K."/>
        </authorList>
    </citation>
    <scope>STRUCTURE BY NMR</scope>
    <scope>DEHYDRATION AT THR-4 AND THR-13</scope>
    <scope>METHYLATION AT THR-8</scope>
    <scope>HYDROXYLATION AT VAL-6</scope>
    <source>
        <strain>G-15</strain>
    </source>
</reference>
<keyword id="KW-0044">Antibiotic</keyword>
<keyword id="KW-0929">Antimicrobial</keyword>
<keyword id="KW-0078">Bacteriocin</keyword>
<keyword id="KW-0379">Hydroxylation</keyword>
<keyword id="KW-0488">Methylation</keyword>
<keyword id="KW-0964">Secreted</keyword>
<keyword id="KW-0883">Thioether bond</keyword>
<sequence length="14" mass="1416">SCTTCVCTCSCCTT</sequence>
<comment type="function">
    <text>Has bacteriocidal activity against Gram-positive bacteria, but not against Gram-negative bacteria. Inhibits bacterial protein biosynthesis by acting on the elongation factor Tu (EF-Tu).</text>
</comment>
<comment type="subcellular location">
    <subcellularLocation>
        <location evidence="3">Secreted</location>
    </subcellularLocation>
</comment>
<comment type="PTM">
    <text>Maturation of thiazole and oxazole containing antibiotics involves the enzymatic condensation of a Cys, Ser or Thr with the alpha-carbonyl of the preceding amino acid to form a thioether or ether bond, then dehydration to form a double bond with the alpha-amino nitrogen. Thiazoline or oxazoline ring are dehydrogenated to form thiazole or oxazole rings.</text>
</comment>
<comment type="PTM">
    <text>Maturation of pyridinyl containing antibiotics involves the cross-linking of a Ser and a Cys-Ser pair usually separated by 7 or 8 residues along the peptide chain. The Ser residues are dehydrated to didehydroalanines, then bonded between their beta carbons. The alpha carbonyl of the Cys condenses with alpha carbon of the first Ser to form a pyridinyl ring. The ring may be multiply dehydrogenated to form a pyridine ring with loss of the amino nitrogen of the first Ser.</text>
</comment>
<comment type="PTM">
    <text>3 isomers may exist: thiocillin I, identified in B.cereus G-15, thiocillin II, identified in both B.badius and B.cereus G-15, and thiocillin III identified in B.badius only. The structural differences between them lie in the extent of the modifications at two positions, as shown in the feature table.</text>
</comment>
<comment type="PTM">
    <text>The structure of the 2,3-didehydrobutyrines is not discussed in PubMed:7328054. However, in Fig. 1 the residues are diagrammed as Z-isomers.</text>
</comment>
<comment type="similarity">
    <text evidence="4">Belongs to the thiocillin family.</text>
</comment>
<feature type="peptide" id="PRO_0000363167" description="Thiocillin">
    <location>
        <begin position="1"/>
        <end position="14"/>
    </location>
</feature>
<feature type="site" description="Not methylated; in form thiocillin I">
    <location>
        <position position="8"/>
    </location>
</feature>
<feature type="modified residue" description="(Z)-2,3-didehydrobutyrine" evidence="2">
    <location>
        <position position="4"/>
    </location>
</feature>
<feature type="modified residue" description="3-hydroxyvaline (Val); in form thiocillin I and form thiocillin II" evidence="2">
    <location>
        <position position="6"/>
    </location>
</feature>
<feature type="modified residue" description="O-methylthreonine; in form thiocillin II" evidence="2">
    <location>
        <position position="8"/>
    </location>
</feature>
<feature type="modified residue" description="(Z)-2,3-didehydrobutyrine" evidence="2">
    <location>
        <position position="13"/>
    </location>
</feature>
<feature type="modified residue" description="Decarboxylated threonine" evidence="1">
    <location>
        <position position="14"/>
    </location>
</feature>
<feature type="cross-link" description="Pyridine-2,5-dicarboxylic acid (Ser-Ser) (with C-9)">
    <location>
        <begin position="1"/>
        <end position="10"/>
    </location>
</feature>
<feature type="cross-link" description="Pyridine-2,5-dicarboxylic acid (Ser-Cys) (with S-10)">
    <location>
        <begin position="1"/>
        <end position="9"/>
    </location>
</feature>
<feature type="cross-link" description="Thiazole-4-carboxylic acid (Ser-Cys)">
    <location>
        <begin position="1"/>
        <end position="2"/>
    </location>
</feature>
<feature type="cross-link" description="Thiazole-4-carboxylic acid (Thr-Cys)">
    <location>
        <begin position="4"/>
        <end position="5"/>
    </location>
</feature>
<feature type="cross-link" description="Thiazole-4-carboxylic acid (Val-Cys)">
    <location>
        <begin position="6"/>
        <end position="7"/>
    </location>
</feature>
<feature type="cross-link" description="Thiazole-4-carboxylic acid (Thr-Cys)">
    <location>
        <begin position="8"/>
        <end position="9"/>
    </location>
</feature>
<feature type="cross-link" description="Thiazole-4-carboxylic acid (Ser-Cys)">
    <location>
        <begin position="10"/>
        <end position="11"/>
    </location>
</feature>
<feature type="cross-link" description="Thiazole-4-carboxylic acid (Cys-Cys)">
    <location>
        <begin position="11"/>
        <end position="12"/>
    </location>
</feature>
<protein>
    <recommendedName>
        <fullName>Thiocillin</fullName>
    </recommendedName>
</protein>
<proteinExistence type="evidence at protein level"/>